<gene>
    <name evidence="1" type="primary">rpsP</name>
    <name type="ordered locus">SEN2597</name>
</gene>
<organism>
    <name type="scientific">Salmonella enteritidis PT4 (strain P125109)</name>
    <dbReference type="NCBI Taxonomy" id="550537"/>
    <lineage>
        <taxon>Bacteria</taxon>
        <taxon>Pseudomonadati</taxon>
        <taxon>Pseudomonadota</taxon>
        <taxon>Gammaproteobacteria</taxon>
        <taxon>Enterobacterales</taxon>
        <taxon>Enterobacteriaceae</taxon>
        <taxon>Salmonella</taxon>
    </lineage>
</organism>
<reference key="1">
    <citation type="journal article" date="2008" name="Genome Res.">
        <title>Comparative genome analysis of Salmonella enteritidis PT4 and Salmonella gallinarum 287/91 provides insights into evolutionary and host adaptation pathways.</title>
        <authorList>
            <person name="Thomson N.R."/>
            <person name="Clayton D.J."/>
            <person name="Windhorst D."/>
            <person name="Vernikos G."/>
            <person name="Davidson S."/>
            <person name="Churcher C."/>
            <person name="Quail M.A."/>
            <person name="Stevens M."/>
            <person name="Jones M.A."/>
            <person name="Watson M."/>
            <person name="Barron A."/>
            <person name="Layton A."/>
            <person name="Pickard D."/>
            <person name="Kingsley R.A."/>
            <person name="Bignell A."/>
            <person name="Clark L."/>
            <person name="Harris B."/>
            <person name="Ormond D."/>
            <person name="Abdellah Z."/>
            <person name="Brooks K."/>
            <person name="Cherevach I."/>
            <person name="Chillingworth T."/>
            <person name="Woodward J."/>
            <person name="Norberczak H."/>
            <person name="Lord A."/>
            <person name="Arrowsmith C."/>
            <person name="Jagels K."/>
            <person name="Moule S."/>
            <person name="Mungall K."/>
            <person name="Saunders M."/>
            <person name="Whitehead S."/>
            <person name="Chabalgoity J.A."/>
            <person name="Maskell D."/>
            <person name="Humphreys T."/>
            <person name="Roberts M."/>
            <person name="Barrow P.A."/>
            <person name="Dougan G."/>
            <person name="Parkhill J."/>
        </authorList>
    </citation>
    <scope>NUCLEOTIDE SEQUENCE [LARGE SCALE GENOMIC DNA]</scope>
    <source>
        <strain>P125109</strain>
    </source>
</reference>
<sequence length="82" mass="9235">MVTIRLARHGAKKRPFYQVVVTDSRNARNGRFIERVGFFNPIASEKEEGTRLDLDRIAHWVGQGATISDRVAALIKEVKKAA</sequence>
<comment type="similarity">
    <text evidence="1">Belongs to the bacterial ribosomal protein bS16 family.</text>
</comment>
<dbReference type="EMBL" id="AM933172">
    <property type="protein sequence ID" value="CAR34179.1"/>
    <property type="molecule type" value="Genomic_DNA"/>
</dbReference>
<dbReference type="RefSeq" id="WP_000256453.1">
    <property type="nucleotide sequence ID" value="NC_011294.1"/>
</dbReference>
<dbReference type="SMR" id="B5QUG4"/>
<dbReference type="KEGG" id="set:SEN2597"/>
<dbReference type="HOGENOM" id="CLU_100590_5_1_6"/>
<dbReference type="Proteomes" id="UP000000613">
    <property type="component" value="Chromosome"/>
</dbReference>
<dbReference type="GO" id="GO:0005737">
    <property type="term" value="C:cytoplasm"/>
    <property type="evidence" value="ECO:0007669"/>
    <property type="project" value="UniProtKB-ARBA"/>
</dbReference>
<dbReference type="GO" id="GO:0015935">
    <property type="term" value="C:small ribosomal subunit"/>
    <property type="evidence" value="ECO:0007669"/>
    <property type="project" value="TreeGrafter"/>
</dbReference>
<dbReference type="GO" id="GO:0003735">
    <property type="term" value="F:structural constituent of ribosome"/>
    <property type="evidence" value="ECO:0007669"/>
    <property type="project" value="InterPro"/>
</dbReference>
<dbReference type="GO" id="GO:0006412">
    <property type="term" value="P:translation"/>
    <property type="evidence" value="ECO:0007669"/>
    <property type="project" value="UniProtKB-UniRule"/>
</dbReference>
<dbReference type="FunFam" id="3.30.1320.10:FF:000001">
    <property type="entry name" value="30S ribosomal protein S16"/>
    <property type="match status" value="1"/>
</dbReference>
<dbReference type="Gene3D" id="3.30.1320.10">
    <property type="match status" value="1"/>
</dbReference>
<dbReference type="HAMAP" id="MF_00385">
    <property type="entry name" value="Ribosomal_bS16"/>
    <property type="match status" value="1"/>
</dbReference>
<dbReference type="InterPro" id="IPR000307">
    <property type="entry name" value="Ribosomal_bS16"/>
</dbReference>
<dbReference type="InterPro" id="IPR020592">
    <property type="entry name" value="Ribosomal_bS16_CS"/>
</dbReference>
<dbReference type="InterPro" id="IPR023803">
    <property type="entry name" value="Ribosomal_bS16_dom_sf"/>
</dbReference>
<dbReference type="NCBIfam" id="TIGR00002">
    <property type="entry name" value="S16"/>
    <property type="match status" value="1"/>
</dbReference>
<dbReference type="PANTHER" id="PTHR12919">
    <property type="entry name" value="30S RIBOSOMAL PROTEIN S16"/>
    <property type="match status" value="1"/>
</dbReference>
<dbReference type="PANTHER" id="PTHR12919:SF20">
    <property type="entry name" value="SMALL RIBOSOMAL SUBUNIT PROTEIN BS16M"/>
    <property type="match status" value="1"/>
</dbReference>
<dbReference type="Pfam" id="PF00886">
    <property type="entry name" value="Ribosomal_S16"/>
    <property type="match status" value="1"/>
</dbReference>
<dbReference type="SUPFAM" id="SSF54565">
    <property type="entry name" value="Ribosomal protein S16"/>
    <property type="match status" value="1"/>
</dbReference>
<dbReference type="PROSITE" id="PS00732">
    <property type="entry name" value="RIBOSOMAL_S16"/>
    <property type="match status" value="1"/>
</dbReference>
<protein>
    <recommendedName>
        <fullName evidence="1">Small ribosomal subunit protein bS16</fullName>
    </recommendedName>
    <alternativeName>
        <fullName evidence="2">30S ribosomal protein S16</fullName>
    </alternativeName>
</protein>
<evidence type="ECO:0000255" key="1">
    <source>
        <dbReference type="HAMAP-Rule" id="MF_00385"/>
    </source>
</evidence>
<evidence type="ECO:0000305" key="2"/>
<proteinExistence type="inferred from homology"/>
<accession>B5QUG4</accession>
<name>RS16_SALEP</name>
<keyword id="KW-0687">Ribonucleoprotein</keyword>
<keyword id="KW-0689">Ribosomal protein</keyword>
<feature type="chain" id="PRO_1000196467" description="Small ribosomal subunit protein bS16">
    <location>
        <begin position="1"/>
        <end position="82"/>
    </location>
</feature>